<feature type="chain" id="PRO_0000172791" description="Uronate isomerase">
    <location>
        <begin position="1"/>
        <end position="470"/>
    </location>
</feature>
<protein>
    <recommendedName>
        <fullName evidence="1">Uronate isomerase</fullName>
        <ecNumber evidence="1">5.3.1.12</ecNumber>
    </recommendedName>
    <alternativeName>
        <fullName evidence="1">Glucuronate isomerase</fullName>
    </alternativeName>
    <alternativeName>
        <fullName evidence="1">Uronic isomerase</fullName>
    </alternativeName>
</protein>
<name>UXAC_VIBPA</name>
<keyword id="KW-0413">Isomerase</keyword>
<dbReference type="EC" id="5.3.1.12" evidence="1"/>
<dbReference type="EMBL" id="BA000032">
    <property type="protein sequence ID" value="BAC63049.1"/>
    <property type="molecule type" value="Genomic_DNA"/>
</dbReference>
<dbReference type="RefSeq" id="NP_801216.1">
    <property type="nucleotide sequence ID" value="NC_004605.1"/>
</dbReference>
<dbReference type="RefSeq" id="WP_005477444.1">
    <property type="nucleotide sequence ID" value="NC_004605.1"/>
</dbReference>
<dbReference type="SMR" id="Q87FH3"/>
<dbReference type="GeneID" id="1192402"/>
<dbReference type="KEGG" id="vpa:VPA1706"/>
<dbReference type="PATRIC" id="fig|223926.6.peg.4622"/>
<dbReference type="eggNOG" id="COG1904">
    <property type="taxonomic scope" value="Bacteria"/>
</dbReference>
<dbReference type="HOGENOM" id="CLU_044465_1_0_6"/>
<dbReference type="UniPathway" id="UPA00246"/>
<dbReference type="Proteomes" id="UP000002493">
    <property type="component" value="Chromosome 2"/>
</dbReference>
<dbReference type="GO" id="GO:0008880">
    <property type="term" value="F:glucuronate isomerase activity"/>
    <property type="evidence" value="ECO:0007669"/>
    <property type="project" value="UniProtKB-UniRule"/>
</dbReference>
<dbReference type="GO" id="GO:0019698">
    <property type="term" value="P:D-galacturonate catabolic process"/>
    <property type="evidence" value="ECO:0007669"/>
    <property type="project" value="TreeGrafter"/>
</dbReference>
<dbReference type="GO" id="GO:0042840">
    <property type="term" value="P:D-glucuronate catabolic process"/>
    <property type="evidence" value="ECO:0007669"/>
    <property type="project" value="TreeGrafter"/>
</dbReference>
<dbReference type="Gene3D" id="3.20.20.140">
    <property type="entry name" value="Metal-dependent hydrolases"/>
    <property type="match status" value="1"/>
</dbReference>
<dbReference type="Gene3D" id="1.10.2020.10">
    <property type="entry name" value="uronate isomerase, domain 2, chain A"/>
    <property type="match status" value="1"/>
</dbReference>
<dbReference type="HAMAP" id="MF_00675">
    <property type="entry name" value="UxaC"/>
    <property type="match status" value="1"/>
</dbReference>
<dbReference type="InterPro" id="IPR032466">
    <property type="entry name" value="Metal_Hydrolase"/>
</dbReference>
<dbReference type="InterPro" id="IPR003766">
    <property type="entry name" value="Uronate_isomerase"/>
</dbReference>
<dbReference type="NCBIfam" id="NF002794">
    <property type="entry name" value="PRK02925.1"/>
    <property type="match status" value="1"/>
</dbReference>
<dbReference type="PANTHER" id="PTHR30068">
    <property type="entry name" value="URONATE ISOMERASE"/>
    <property type="match status" value="1"/>
</dbReference>
<dbReference type="PANTHER" id="PTHR30068:SF4">
    <property type="entry name" value="URONATE ISOMERASE"/>
    <property type="match status" value="1"/>
</dbReference>
<dbReference type="Pfam" id="PF02614">
    <property type="entry name" value="UxaC"/>
    <property type="match status" value="1"/>
</dbReference>
<dbReference type="SUPFAM" id="SSF51556">
    <property type="entry name" value="Metallo-dependent hydrolases"/>
    <property type="match status" value="1"/>
</dbReference>
<gene>
    <name evidence="1" type="primary">uxaC</name>
    <name type="ordered locus">VPA1706</name>
</gene>
<comment type="catalytic activity">
    <reaction evidence="1">
        <text>D-glucuronate = D-fructuronate</text>
        <dbReference type="Rhea" id="RHEA:13049"/>
        <dbReference type="ChEBI" id="CHEBI:58720"/>
        <dbReference type="ChEBI" id="CHEBI:59863"/>
        <dbReference type="EC" id="5.3.1.12"/>
    </reaction>
</comment>
<comment type="catalytic activity">
    <reaction evidence="1">
        <text>aldehydo-D-galacturonate = keto-D-tagaturonate</text>
        <dbReference type="Rhea" id="RHEA:27702"/>
        <dbReference type="ChEBI" id="CHEBI:12952"/>
        <dbReference type="ChEBI" id="CHEBI:17886"/>
        <dbReference type="EC" id="5.3.1.12"/>
    </reaction>
</comment>
<comment type="pathway">
    <text evidence="1">Carbohydrate metabolism; pentose and glucuronate interconversion.</text>
</comment>
<comment type="similarity">
    <text evidence="1">Belongs to the metallo-dependent hydrolases superfamily. Uronate isomerase family.</text>
</comment>
<proteinExistence type="inferred from homology"/>
<organism>
    <name type="scientific">Vibrio parahaemolyticus serotype O3:K6 (strain RIMD 2210633)</name>
    <dbReference type="NCBI Taxonomy" id="223926"/>
    <lineage>
        <taxon>Bacteria</taxon>
        <taxon>Pseudomonadati</taxon>
        <taxon>Pseudomonadota</taxon>
        <taxon>Gammaproteobacteria</taxon>
        <taxon>Vibrionales</taxon>
        <taxon>Vibrionaceae</taxon>
        <taxon>Vibrio</taxon>
    </lineage>
</organism>
<reference key="1">
    <citation type="journal article" date="2003" name="Lancet">
        <title>Genome sequence of Vibrio parahaemolyticus: a pathogenic mechanism distinct from that of V. cholerae.</title>
        <authorList>
            <person name="Makino K."/>
            <person name="Oshima K."/>
            <person name="Kurokawa K."/>
            <person name="Yokoyama K."/>
            <person name="Uda T."/>
            <person name="Tagomori K."/>
            <person name="Iijima Y."/>
            <person name="Najima M."/>
            <person name="Nakano M."/>
            <person name="Yamashita A."/>
            <person name="Kubota Y."/>
            <person name="Kimura S."/>
            <person name="Yasunaga T."/>
            <person name="Honda T."/>
            <person name="Shinagawa H."/>
            <person name="Hattori M."/>
            <person name="Iida T."/>
        </authorList>
    </citation>
    <scope>NUCLEOTIDE SEQUENCE [LARGE SCALE GENOMIC DNA]</scope>
    <source>
        <strain>RIMD 2210633</strain>
    </source>
</reference>
<evidence type="ECO:0000255" key="1">
    <source>
        <dbReference type="HAMAP-Rule" id="MF_00675"/>
    </source>
</evidence>
<sequence length="470" mass="53987">MKNFLCEDFLLSNETARRLYHEHAFHQPIYDYHCHLNPAEVTQNRQFDNLGQIWLEGDHYKWRGMRSAGIEERLITGDASDYDKYMAWAKTVPQTLGNPLYHWTHLELRRPFGITNTLFSPDTADQIWHQCNELLATPEFTARGIMQQMNVVMAGTTDDPIDSLEHHKAIAEDDTFNVKVLPSWRPDKAFKIELDLFADYMHKLGEVADIDIRRFDDLLSALDKRLAHFDSHGCRAADHGIEIVRYAPIPSEADLDALLARRLSGEVLSELECAQFSTAVQVWLGKRYAQLGWVMQLHIGAQRNNSTRMFQLLGADAGFDSIGDRPFAFELAHLLDEMDQTNELPRTILYCLNPRDNEMMATMIGNFQGGGIAGKVQFGSGWWFNDQKDGMQRQMEQLSQLGLLSQFVGMLTDSRSFLSYTRHEYFRRILCDMVGRWAENGEVPNDLSLLGPMVEDICFGNAKRYFEERA</sequence>
<accession>Q87FH3</accession>